<dbReference type="EMBL" id="CP000053">
    <property type="protein sequence ID" value="AAY62211.1"/>
    <property type="status" value="ALT_INIT"/>
    <property type="molecule type" value="Genomic_DNA"/>
</dbReference>
<dbReference type="SMR" id="Q4UJS8"/>
<dbReference type="STRING" id="315456.RF_1360"/>
<dbReference type="KEGG" id="rfe:RF_1360"/>
<dbReference type="eggNOG" id="COG0782">
    <property type="taxonomic scope" value="Bacteria"/>
</dbReference>
<dbReference type="HOGENOM" id="CLU_101379_2_0_5"/>
<dbReference type="OrthoDB" id="9808774at2"/>
<dbReference type="Proteomes" id="UP000008548">
    <property type="component" value="Chromosome"/>
</dbReference>
<dbReference type="GO" id="GO:0003677">
    <property type="term" value="F:DNA binding"/>
    <property type="evidence" value="ECO:0007669"/>
    <property type="project" value="UniProtKB-UniRule"/>
</dbReference>
<dbReference type="GO" id="GO:0070063">
    <property type="term" value="F:RNA polymerase binding"/>
    <property type="evidence" value="ECO:0007669"/>
    <property type="project" value="InterPro"/>
</dbReference>
<dbReference type="GO" id="GO:0006354">
    <property type="term" value="P:DNA-templated transcription elongation"/>
    <property type="evidence" value="ECO:0007669"/>
    <property type="project" value="TreeGrafter"/>
</dbReference>
<dbReference type="GO" id="GO:0032784">
    <property type="term" value="P:regulation of DNA-templated transcription elongation"/>
    <property type="evidence" value="ECO:0007669"/>
    <property type="project" value="UniProtKB-UniRule"/>
</dbReference>
<dbReference type="FunFam" id="1.10.287.180:FF:000001">
    <property type="entry name" value="Transcription elongation factor GreA"/>
    <property type="match status" value="1"/>
</dbReference>
<dbReference type="FunFam" id="3.10.50.30:FF:000001">
    <property type="entry name" value="Transcription elongation factor GreA"/>
    <property type="match status" value="1"/>
</dbReference>
<dbReference type="Gene3D" id="3.10.50.30">
    <property type="entry name" value="Transcription elongation factor, GreA/GreB, C-terminal domain"/>
    <property type="match status" value="1"/>
</dbReference>
<dbReference type="Gene3D" id="1.10.287.180">
    <property type="entry name" value="Transcription elongation factor, GreA/GreB, N-terminal domain"/>
    <property type="match status" value="1"/>
</dbReference>
<dbReference type="HAMAP" id="MF_00105">
    <property type="entry name" value="GreA_GreB"/>
    <property type="match status" value="1"/>
</dbReference>
<dbReference type="InterPro" id="IPR036953">
    <property type="entry name" value="GreA/GreB_C_sf"/>
</dbReference>
<dbReference type="InterPro" id="IPR018151">
    <property type="entry name" value="TF_GreA/GreB_CS"/>
</dbReference>
<dbReference type="InterPro" id="IPR006359">
    <property type="entry name" value="Tscrpt_elong_fac_GreA"/>
</dbReference>
<dbReference type="InterPro" id="IPR028624">
    <property type="entry name" value="Tscrpt_elong_fac_GreA/B"/>
</dbReference>
<dbReference type="InterPro" id="IPR001437">
    <property type="entry name" value="Tscrpt_elong_fac_GreA/B_C"/>
</dbReference>
<dbReference type="InterPro" id="IPR023459">
    <property type="entry name" value="Tscrpt_elong_fac_GreA/B_fam"/>
</dbReference>
<dbReference type="InterPro" id="IPR022691">
    <property type="entry name" value="Tscrpt_elong_fac_GreA/B_N"/>
</dbReference>
<dbReference type="InterPro" id="IPR036805">
    <property type="entry name" value="Tscrpt_elong_fac_GreA/B_N_sf"/>
</dbReference>
<dbReference type="NCBIfam" id="TIGR01462">
    <property type="entry name" value="greA"/>
    <property type="match status" value="1"/>
</dbReference>
<dbReference type="NCBIfam" id="NF001261">
    <property type="entry name" value="PRK00226.1-2"/>
    <property type="match status" value="1"/>
</dbReference>
<dbReference type="NCBIfam" id="NF001263">
    <property type="entry name" value="PRK00226.1-4"/>
    <property type="match status" value="1"/>
</dbReference>
<dbReference type="NCBIfam" id="NF001264">
    <property type="entry name" value="PRK00226.1-5"/>
    <property type="match status" value="1"/>
</dbReference>
<dbReference type="PANTHER" id="PTHR30437">
    <property type="entry name" value="TRANSCRIPTION ELONGATION FACTOR GREA"/>
    <property type="match status" value="1"/>
</dbReference>
<dbReference type="PANTHER" id="PTHR30437:SF4">
    <property type="entry name" value="TRANSCRIPTION ELONGATION FACTOR GREA"/>
    <property type="match status" value="1"/>
</dbReference>
<dbReference type="Pfam" id="PF01272">
    <property type="entry name" value="GreA_GreB"/>
    <property type="match status" value="1"/>
</dbReference>
<dbReference type="Pfam" id="PF03449">
    <property type="entry name" value="GreA_GreB_N"/>
    <property type="match status" value="1"/>
</dbReference>
<dbReference type="PIRSF" id="PIRSF006092">
    <property type="entry name" value="GreA_GreB"/>
    <property type="match status" value="1"/>
</dbReference>
<dbReference type="SUPFAM" id="SSF54534">
    <property type="entry name" value="FKBP-like"/>
    <property type="match status" value="1"/>
</dbReference>
<dbReference type="SUPFAM" id="SSF46557">
    <property type="entry name" value="GreA transcript cleavage protein, N-terminal domain"/>
    <property type="match status" value="1"/>
</dbReference>
<dbReference type="PROSITE" id="PS00829">
    <property type="entry name" value="GREAB_1"/>
    <property type="match status" value="1"/>
</dbReference>
<dbReference type="PROSITE" id="PS00830">
    <property type="entry name" value="GREAB_2"/>
    <property type="match status" value="1"/>
</dbReference>
<evidence type="ECO:0000255" key="1">
    <source>
        <dbReference type="HAMAP-Rule" id="MF_00105"/>
    </source>
</evidence>
<evidence type="ECO:0000305" key="2"/>
<proteinExistence type="inferred from homology"/>
<keyword id="KW-0175">Coiled coil</keyword>
<keyword id="KW-0238">DNA-binding</keyword>
<keyword id="KW-0804">Transcription</keyword>
<keyword id="KW-0805">Transcription regulation</keyword>
<sequence length="162" mass="18201">MNTKFPITAKGFEKLEHELKHLKHVERKKISEDIAEAREHGDLSENAEYEAAREKQAFIEGRIKELEDMTARAEIIDIGKLSGDNIKFGATVTLIDDDTEEEVTYIIVGEYEADITRKRVSIASPIAKALIGKSVGDFVEVTTPKGSKSYEVVTVEYKELEL</sequence>
<reference key="1">
    <citation type="journal article" date="2005" name="PLoS Biol.">
        <title>The genome sequence of Rickettsia felis identifies the first putative conjugative plasmid in an obligate intracellular parasite.</title>
        <authorList>
            <person name="Ogata H."/>
            <person name="Renesto P."/>
            <person name="Audic S."/>
            <person name="Robert C."/>
            <person name="Blanc G."/>
            <person name="Fournier P.-E."/>
            <person name="Parinello H."/>
            <person name="Claverie J.-M."/>
            <person name="Raoult D."/>
        </authorList>
    </citation>
    <scope>NUCLEOTIDE SEQUENCE [LARGE SCALE GENOMIC DNA]</scope>
    <source>
        <strain>ATCC VR-1525 / URRWXCal2</strain>
    </source>
</reference>
<feature type="chain" id="PRO_0000277901" description="Transcription elongation factor GreA">
    <location>
        <begin position="1"/>
        <end position="162"/>
    </location>
</feature>
<feature type="coiled-coil region" evidence="1">
    <location>
        <begin position="45"/>
        <end position="74"/>
    </location>
</feature>
<comment type="function">
    <text evidence="1">Necessary for efficient RNA polymerase transcription elongation past template-encoded arresting sites. The arresting sites in DNA have the property of trapping a certain fraction of elongating RNA polymerases that pass through, resulting in locked ternary complexes. Cleavage of the nascent transcript by cleavage factors such as GreA or GreB allows the resumption of elongation from the new 3'terminus. GreA releases sequences of 2 to 3 nucleotides.</text>
</comment>
<comment type="similarity">
    <text evidence="1">Belongs to the GreA/GreB family.</text>
</comment>
<comment type="sequence caution" evidence="2">
    <conflict type="erroneous initiation">
        <sequence resource="EMBL-CDS" id="AAY62211"/>
    </conflict>
</comment>
<name>GREA_RICFE</name>
<organism>
    <name type="scientific">Rickettsia felis (strain ATCC VR-1525 / URRWXCal2)</name>
    <name type="common">Rickettsia azadi</name>
    <dbReference type="NCBI Taxonomy" id="315456"/>
    <lineage>
        <taxon>Bacteria</taxon>
        <taxon>Pseudomonadati</taxon>
        <taxon>Pseudomonadota</taxon>
        <taxon>Alphaproteobacteria</taxon>
        <taxon>Rickettsiales</taxon>
        <taxon>Rickettsiaceae</taxon>
        <taxon>Rickettsieae</taxon>
        <taxon>Rickettsia</taxon>
        <taxon>spotted fever group</taxon>
    </lineage>
</organism>
<gene>
    <name evidence="1" type="primary">greA</name>
    <name type="ordered locus">RF_1360</name>
</gene>
<accession>Q4UJS8</accession>
<protein>
    <recommendedName>
        <fullName evidence="1">Transcription elongation factor GreA</fullName>
    </recommendedName>
    <alternativeName>
        <fullName evidence="1">Transcript cleavage factor GreA</fullName>
    </alternativeName>
</protein>